<comment type="function">
    <text evidence="1">Catalyzes the 2-thiolation of uridine at the wobble position (U34) of tRNA, leading to the formation of s(2)U34.</text>
</comment>
<comment type="catalytic activity">
    <reaction evidence="1">
        <text>S-sulfanyl-L-cysteinyl-[protein] + uridine(34) in tRNA + AH2 + ATP = 2-thiouridine(34) in tRNA + L-cysteinyl-[protein] + A + AMP + diphosphate + H(+)</text>
        <dbReference type="Rhea" id="RHEA:47032"/>
        <dbReference type="Rhea" id="RHEA-COMP:10131"/>
        <dbReference type="Rhea" id="RHEA-COMP:11726"/>
        <dbReference type="Rhea" id="RHEA-COMP:11727"/>
        <dbReference type="Rhea" id="RHEA-COMP:11728"/>
        <dbReference type="ChEBI" id="CHEBI:13193"/>
        <dbReference type="ChEBI" id="CHEBI:15378"/>
        <dbReference type="ChEBI" id="CHEBI:17499"/>
        <dbReference type="ChEBI" id="CHEBI:29950"/>
        <dbReference type="ChEBI" id="CHEBI:30616"/>
        <dbReference type="ChEBI" id="CHEBI:33019"/>
        <dbReference type="ChEBI" id="CHEBI:61963"/>
        <dbReference type="ChEBI" id="CHEBI:65315"/>
        <dbReference type="ChEBI" id="CHEBI:87170"/>
        <dbReference type="ChEBI" id="CHEBI:456215"/>
        <dbReference type="EC" id="2.8.1.13"/>
    </reaction>
</comment>
<comment type="subcellular location">
    <subcellularLocation>
        <location evidence="1">Cytoplasm</location>
    </subcellularLocation>
</comment>
<comment type="similarity">
    <text evidence="1">Belongs to the MnmA/TRMU family.</text>
</comment>
<gene>
    <name evidence="1" type="primary">mnmA</name>
    <name type="ordered locus">Csac_2252</name>
</gene>
<reference key="1">
    <citation type="submission" date="2007-04" db="EMBL/GenBank/DDBJ databases">
        <title>Genome sequence of the thermophilic hydrogen-producing bacterium Caldicellulosiruptor saccharolyticus DSM 8903.</title>
        <authorList>
            <person name="Copeland A."/>
            <person name="Lucas S."/>
            <person name="Lapidus A."/>
            <person name="Barry K."/>
            <person name="Detter J.C."/>
            <person name="Glavina del Rio T."/>
            <person name="Hammon N."/>
            <person name="Israni S."/>
            <person name="Dalin E."/>
            <person name="Tice H."/>
            <person name="Pitluck S."/>
            <person name="Kiss H."/>
            <person name="Brettin T."/>
            <person name="Bruce D."/>
            <person name="Han C."/>
            <person name="Schmutz J."/>
            <person name="Larimer F."/>
            <person name="Land M."/>
            <person name="Hauser L."/>
            <person name="Kyrpides N."/>
            <person name="Lykidis A."/>
            <person name="van de Werken H.J.G."/>
            <person name="Verhaart M.R.A."/>
            <person name="VanFossen A.L."/>
            <person name="Lewis D.L."/>
            <person name="Nichols J.D."/>
            <person name="Goorissen H.P."/>
            <person name="van Niel E.W.J."/>
            <person name="Stams F.J.M."/>
            <person name="Willquist K.U."/>
            <person name="Ward D.E."/>
            <person name="van der Oost J."/>
            <person name="Kelly R.M."/>
            <person name="Kengen S.M.W."/>
            <person name="Richardson P."/>
        </authorList>
    </citation>
    <scope>NUCLEOTIDE SEQUENCE [LARGE SCALE GENOMIC DNA]</scope>
    <source>
        <strain>ATCC 43494 / DSM 8903 / Tp8T 6331</strain>
    </source>
</reference>
<organism>
    <name type="scientific">Caldicellulosiruptor saccharolyticus (strain ATCC 43494 / DSM 8903 / Tp8T 6331)</name>
    <dbReference type="NCBI Taxonomy" id="351627"/>
    <lineage>
        <taxon>Bacteria</taxon>
        <taxon>Bacillati</taxon>
        <taxon>Bacillota</taxon>
        <taxon>Bacillota incertae sedis</taxon>
        <taxon>Caldicellulosiruptorales</taxon>
        <taxon>Caldicellulosiruptoraceae</taxon>
        <taxon>Caldicellulosiruptor</taxon>
    </lineage>
</organism>
<dbReference type="EC" id="2.8.1.13" evidence="1"/>
<dbReference type="EMBL" id="CP000679">
    <property type="protein sequence ID" value="ABP67830.1"/>
    <property type="molecule type" value="Genomic_DNA"/>
</dbReference>
<dbReference type="SMR" id="A4XLP5"/>
<dbReference type="STRING" id="351627.Csac_2252"/>
<dbReference type="KEGG" id="csc:Csac_2252"/>
<dbReference type="eggNOG" id="COG0482">
    <property type="taxonomic scope" value="Bacteria"/>
</dbReference>
<dbReference type="HOGENOM" id="CLU_035188_0_0_9"/>
<dbReference type="OrthoDB" id="9800696at2"/>
<dbReference type="Proteomes" id="UP000000256">
    <property type="component" value="Chromosome"/>
</dbReference>
<dbReference type="GO" id="GO:0005737">
    <property type="term" value="C:cytoplasm"/>
    <property type="evidence" value="ECO:0007669"/>
    <property type="project" value="UniProtKB-SubCell"/>
</dbReference>
<dbReference type="GO" id="GO:0005524">
    <property type="term" value="F:ATP binding"/>
    <property type="evidence" value="ECO:0007669"/>
    <property type="project" value="UniProtKB-KW"/>
</dbReference>
<dbReference type="GO" id="GO:0000049">
    <property type="term" value="F:tRNA binding"/>
    <property type="evidence" value="ECO:0007669"/>
    <property type="project" value="UniProtKB-KW"/>
</dbReference>
<dbReference type="GO" id="GO:0103016">
    <property type="term" value="F:tRNA-uridine 2-sulfurtransferase activity"/>
    <property type="evidence" value="ECO:0007669"/>
    <property type="project" value="UniProtKB-EC"/>
</dbReference>
<dbReference type="GO" id="GO:0002143">
    <property type="term" value="P:tRNA wobble position uridine thiolation"/>
    <property type="evidence" value="ECO:0007669"/>
    <property type="project" value="TreeGrafter"/>
</dbReference>
<dbReference type="CDD" id="cd01998">
    <property type="entry name" value="MnmA_TRMU-like"/>
    <property type="match status" value="1"/>
</dbReference>
<dbReference type="FunFam" id="2.40.30.10:FF:000023">
    <property type="entry name" value="tRNA-specific 2-thiouridylase MnmA"/>
    <property type="match status" value="1"/>
</dbReference>
<dbReference type="FunFam" id="3.40.50.620:FF:000115">
    <property type="entry name" value="tRNA-specific 2-thiouridylase MnmA"/>
    <property type="match status" value="1"/>
</dbReference>
<dbReference type="Gene3D" id="2.30.30.280">
    <property type="entry name" value="Adenine nucleotide alpha hydrolases-like domains"/>
    <property type="match status" value="1"/>
</dbReference>
<dbReference type="Gene3D" id="3.40.50.620">
    <property type="entry name" value="HUPs"/>
    <property type="match status" value="1"/>
</dbReference>
<dbReference type="Gene3D" id="2.40.30.10">
    <property type="entry name" value="Translation factors"/>
    <property type="match status" value="1"/>
</dbReference>
<dbReference type="HAMAP" id="MF_00144">
    <property type="entry name" value="tRNA_thiouridyl_MnmA"/>
    <property type="match status" value="1"/>
</dbReference>
<dbReference type="InterPro" id="IPR004506">
    <property type="entry name" value="MnmA-like"/>
</dbReference>
<dbReference type="InterPro" id="IPR046885">
    <property type="entry name" value="MnmA-like_C"/>
</dbReference>
<dbReference type="InterPro" id="IPR046884">
    <property type="entry name" value="MnmA-like_central"/>
</dbReference>
<dbReference type="InterPro" id="IPR023382">
    <property type="entry name" value="MnmA-like_central_sf"/>
</dbReference>
<dbReference type="InterPro" id="IPR001763">
    <property type="entry name" value="Rhodanese-like_dom"/>
</dbReference>
<dbReference type="InterPro" id="IPR014729">
    <property type="entry name" value="Rossmann-like_a/b/a_fold"/>
</dbReference>
<dbReference type="NCBIfam" id="NF001138">
    <property type="entry name" value="PRK00143.1"/>
    <property type="match status" value="1"/>
</dbReference>
<dbReference type="NCBIfam" id="TIGR00420">
    <property type="entry name" value="trmU"/>
    <property type="match status" value="1"/>
</dbReference>
<dbReference type="PANTHER" id="PTHR11933:SF5">
    <property type="entry name" value="MITOCHONDRIAL TRNA-SPECIFIC 2-THIOURIDYLASE 1"/>
    <property type="match status" value="1"/>
</dbReference>
<dbReference type="PANTHER" id="PTHR11933">
    <property type="entry name" value="TRNA 5-METHYLAMINOMETHYL-2-THIOURIDYLATE -METHYLTRANSFERASE"/>
    <property type="match status" value="1"/>
</dbReference>
<dbReference type="Pfam" id="PF03054">
    <property type="entry name" value="tRNA_Me_trans"/>
    <property type="match status" value="1"/>
</dbReference>
<dbReference type="Pfam" id="PF20258">
    <property type="entry name" value="tRNA_Me_trans_C"/>
    <property type="match status" value="1"/>
</dbReference>
<dbReference type="Pfam" id="PF20259">
    <property type="entry name" value="tRNA_Me_trans_M"/>
    <property type="match status" value="1"/>
</dbReference>
<dbReference type="SUPFAM" id="SSF52402">
    <property type="entry name" value="Adenine nucleotide alpha hydrolases-like"/>
    <property type="match status" value="1"/>
</dbReference>
<evidence type="ECO:0000255" key="1">
    <source>
        <dbReference type="HAMAP-Rule" id="MF_00144"/>
    </source>
</evidence>
<sequence length="361" mass="40900">MKKKVLVAMSGGVDSSVAAAILKEEGYEVYGATMQIWQNECGEELITGKSCCSIYAVDDARKVANILDIPYYVFNMKDDFRKIVIDYFIDEYIKGRTPNPCIMCNRKIKFELFLKKAIAIGMDYIATGHYAIIEYDSSLNRYLLKRSKAKEKDQTYVLYNMTQEMLSKTLFPLGRFSKDEVRKLAEKFKLPVAKKPDSQEICFIPDNNYGKFIEKETGIREDGVYVDTEGNILGKSKAYYNYTIGQRKGLGISTGKRMYVVAIKPEENKVVLGEEGKIFADALIATDLNFIPFDKLESEIEVTAKIRYTAKEAKAKIVPMENNKVLVKFYEKQRAITPGQSVVFYNNDIVVGGGIIEKALV</sequence>
<accession>A4XLP5</accession>
<feature type="chain" id="PRO_0000349567" description="tRNA-specific 2-thiouridylase MnmA">
    <location>
        <begin position="1"/>
        <end position="361"/>
    </location>
</feature>
<feature type="region of interest" description="Interaction with tRNA" evidence="1">
    <location>
        <begin position="152"/>
        <end position="154"/>
    </location>
</feature>
<feature type="region of interest" description="Interaction with tRNA" evidence="1">
    <location>
        <begin position="307"/>
        <end position="308"/>
    </location>
</feature>
<feature type="active site" description="Nucleophile" evidence="1">
    <location>
        <position position="104"/>
    </location>
</feature>
<feature type="active site" description="Cysteine persulfide intermediate" evidence="1">
    <location>
        <position position="202"/>
    </location>
</feature>
<feature type="binding site" evidence="1">
    <location>
        <begin position="8"/>
        <end position="15"/>
    </location>
    <ligand>
        <name>ATP</name>
        <dbReference type="ChEBI" id="CHEBI:30616"/>
    </ligand>
</feature>
<feature type="binding site" evidence="1">
    <location>
        <position position="34"/>
    </location>
    <ligand>
        <name>ATP</name>
        <dbReference type="ChEBI" id="CHEBI:30616"/>
    </ligand>
</feature>
<feature type="binding site" evidence="1">
    <location>
        <position position="128"/>
    </location>
    <ligand>
        <name>ATP</name>
        <dbReference type="ChEBI" id="CHEBI:30616"/>
    </ligand>
</feature>
<feature type="site" description="Interaction with tRNA" evidence="1">
    <location>
        <position position="129"/>
    </location>
</feature>
<feature type="site" description="Interaction with tRNA" evidence="1">
    <location>
        <position position="340"/>
    </location>
</feature>
<feature type="disulfide bond" description="Alternate" evidence="1">
    <location>
        <begin position="104"/>
        <end position="202"/>
    </location>
</feature>
<keyword id="KW-0067">ATP-binding</keyword>
<keyword id="KW-0963">Cytoplasm</keyword>
<keyword id="KW-1015">Disulfide bond</keyword>
<keyword id="KW-0547">Nucleotide-binding</keyword>
<keyword id="KW-0694">RNA-binding</keyword>
<keyword id="KW-0808">Transferase</keyword>
<keyword id="KW-0819">tRNA processing</keyword>
<keyword id="KW-0820">tRNA-binding</keyword>
<name>MNMA_CALS8</name>
<protein>
    <recommendedName>
        <fullName evidence="1">tRNA-specific 2-thiouridylase MnmA</fullName>
        <ecNumber evidence="1">2.8.1.13</ecNumber>
    </recommendedName>
</protein>
<proteinExistence type="inferred from homology"/>